<sequence>MDQEVMDFFDFSKELKRVAAAPQGYISSDPRLMATKFKSSEVPNRELIGTDYVSKIVAKEKCLLNGTLLNEQPQGKRIRTLDDLDTDDEGEETEIRRDDEYYKKFRFNLNRDKNLSIYAKREEILAAINAHPVVIIKGETGCGKTTQVPQYILDEAYKSGKYCNIVVTQPRRIAAISIANRVCQEREWQQNTVCSFQVGLHRPNSLEDTRLLYCTTGVLLNNLINNKTLTHYTHIVLDEVHERDQNMDFLLIVVRRLLATNSRHVKIILMSATIDAKELSDYFTTTNSIPPVITTNHRRKHSIEKFYRDQLGSIIWNEEDVGHQQVPEINKHGYRAAVKIIVIIDNMERKAAIQSRQSYDEALRYGAVLIFLPGIYEIDTMAENLTCMLENDPNIKVSIVRCFSLMTPENQRDVFNPPPPGFRKIILTTNIAESSITVPDVSYVIDFCLAKVKVTDTASSFSSLRLTWASKANCRQRAGRVGRLRSGRVYRMVNKHFYQREMPEFGIPEMLRLPLQNSVLKAKVLNMGSPVEILALALSPPNLSDIHNTILLLKEVGALYLTVDGIYDPLDGDLTYWGTIMSRLPLDTRQSRLIILGYIFNMLEEAIIIAAGLSTPGLFAHEGGRSQLGDSFWMHYIFSDGSGSDLVAIWRVYLTYLNIVENGHDQESAIRWAKRFHVSLRSLKEIHLLVQELRVRCTHLGLIPFPVNPNQMMDDREKAIMLKVIIAGAFYPNYFTRSKESCADTDRNIYQTISGHDPCRTVYFTNFKPAYMGELYTRRIKELFQEVRIPPENMDVTFQEGSQKVFVTFKQDDWIEGSSKYVPVSGRVQSEVYKAVMMRQNRVERPIHIMNPSAFMSYVQQRGIGDVIEGRWIPPTKPLNVELLALPSVFDKTISGSITCIVNCGKFFFQPQSFEECIRNMSEIFNAPQQLRNYVTNASAIAKGMMVLAKRDSYFQRATVIRPENQSNRQPMFYVRFIDYGNCTLLPMQLMRLMPRELTEQYGDLPPRVFECRLAMVQPSSVVSGNNRWSTAANDMLKTVAQCGLIDIEVYSLFNNVAAVLIHMRDGIINDKLVELMLCRRSDEDYMSRKDHDFRLRRQESARNLSTAQRQQINEEYLRSCQLPQDHDLPPPPLEKCKTVVMLKGPNSPLECTMRSITRVGLSKRVNIDHLSVNALLLDADPQDHHDHLIVAHEIAESRNGQTLTARGTTLMPNVQGFGALMVMLFSPTMQLKCNKEGTSYVSVLGGLGCDPDTNEPYFAEHDVLINLDVNILEDDVILINQIRYYIDSVFFNFKEENNPAVSVNERVSIYTQLRSLINRLLCKDRRYIERNMSNADFEWETNPELPLPNEPFGKRAIFPMHSLTELQEEDTGRLVQLRENCSMLHKWRNFEGTLPHMTCKLCNQLLESVPQLRLHLLTILHRDREKQIDYCNQ</sequence>
<comment type="function">
    <text evidence="4 5 6 7 8 9 10 11 12 13 14 15 17">Probable ATP-binding RNA helicase which plays a central role during spermatogenesis and oogenesis by repressing transposable elements and preventing their mobilization, which is essential for the germline integrity. Acts via the piRNA metabolic process, which mediates the repression of transposable elements during meiosis by forming complexes composed of piRNAs and Piwi and govern the methylation and subsequent repression of transposons. Involved in the repression of LTR retrotransposon copia. Also involved in telomere regulation by repressing specialized telomeric retroelements HeT-A, TAHRE, and TART; Drosophila telomeres being maintained by transposition of specialized telomeric retroelements. Involved in telomeric trans-silencing, a repression mechanism by which a transposon or a transgene inserted in subtelomeric heterochromatin has the capacity to repress in trans in the female germline, a homologous transposon, or transgene located in euchromatin. Involved in the repression of testis-expressed Stellate genes by the homologous Su(Ste) repeats. Required for anteroposterior and dorsoventral axis formation during oogenesis. Key component of the perinuclear meiotic nuage, an electron dense structure involved in the post-transcriptional regulation of transposons and mRNAs; required for recruitment of other nuage comonents including vas, krimp, aub and mael (PubMed:17428915). May have a role in production of piwi-interacting RNA (piRNA) (PubMed:17428915).</text>
</comment>
<comment type="catalytic activity">
    <reaction>
        <text>ATP + H2O = ADP + phosphate + H(+)</text>
        <dbReference type="Rhea" id="RHEA:13065"/>
        <dbReference type="ChEBI" id="CHEBI:15377"/>
        <dbReference type="ChEBI" id="CHEBI:15378"/>
        <dbReference type="ChEBI" id="CHEBI:30616"/>
        <dbReference type="ChEBI" id="CHEBI:43474"/>
        <dbReference type="ChEBI" id="CHEBI:456216"/>
        <dbReference type="EC" id="3.6.4.13"/>
    </reaction>
</comment>
<comment type="subcellular location">
    <subcellularLocation>
        <location evidence="16">Cytoplasm</location>
    </subcellularLocation>
    <subcellularLocation>
        <location evidence="16">Cytoplasm</location>
        <location evidence="16">Perinuclear region</location>
    </subcellularLocation>
    <subcellularLocation>
        <location evidence="16">Cytoplasm</location>
        <location evidence="16">Cytoplasmic ribonucleoprotein granule</location>
    </subcellularLocation>
    <text evidence="16">Component of the perinuclear meiotic nuage (also known as germline granule or P granule), a germline-specific membraneless ribonucleoprotein biocondensate involved in post-transcriptional regulation of gene expression.</text>
</comment>
<comment type="disruption phenotype">
    <text evidence="10 15 17">Egg chambers for females lacking spn-E display startmispositioned oocytes. At a low frequency, females generate early egg chambers in which the oocyte is positioned incorrectly within the cyst. At a high frequency, late-stage egg chambers exhibit a ventralized chorion. Flies show transposable elements derepression, an aberrant piRNA profile and a reduction of H3 'Lys-9' methylation and delocalization of HP1 and HP2.</text>
</comment>
<comment type="similarity">
    <text evidence="18">Belongs to the DEAD box helicase family. DEAH subfamily.</text>
</comment>
<comment type="sequence caution" evidence="18">
    <conflict type="frameshift">
        <sequence resource="EMBL-CDS" id="AAB35476"/>
    </conflict>
</comment>
<protein>
    <recommendedName>
        <fullName evidence="18">Probable ATP-dependent RNA helicase spindle-E</fullName>
        <ecNumber>3.6.4.13</ecNumber>
    </recommendedName>
    <alternativeName>
        <fullName evidence="19">Protein homeless</fullName>
    </alternativeName>
</protein>
<feature type="chain" id="PRO_0000391916" description="Probable ATP-dependent RNA helicase spindle-E">
    <location>
        <begin position="1"/>
        <end position="1434"/>
    </location>
</feature>
<feature type="domain" description="Helicase ATP-binding" evidence="2">
    <location>
        <begin position="125"/>
        <end position="292"/>
    </location>
</feature>
<feature type="domain" description="Helicase C-terminal" evidence="3">
    <location>
        <begin position="354"/>
        <end position="526"/>
    </location>
</feature>
<feature type="domain" description="Tudor" evidence="1">
    <location>
        <begin position="938"/>
        <end position="1001"/>
    </location>
</feature>
<feature type="short sequence motif" description="DEAH box">
    <location>
        <begin position="238"/>
        <end position="241"/>
    </location>
</feature>
<feature type="binding site" evidence="2">
    <location>
        <begin position="138"/>
        <end position="145"/>
    </location>
    <ligand>
        <name>ATP</name>
        <dbReference type="ChEBI" id="CHEBI:30616"/>
    </ligand>
</feature>
<feature type="sequence conflict" description="In Ref. 1; AAB35476." evidence="18" ref="1">
    <original>L</original>
    <variation>M</variation>
    <location>
        <position position="47"/>
    </location>
</feature>
<feature type="sequence conflict" description="In Ref. 1; AAB35476." evidence="18" ref="1">
    <original>A</original>
    <variation>G</variation>
    <location>
        <position position="156"/>
    </location>
</feature>
<feature type="sequence conflict" description="In Ref. 1; AAB35476." evidence="18" ref="1">
    <original>Q</original>
    <variation>H</variation>
    <location>
        <position position="325"/>
    </location>
</feature>
<feature type="sequence conflict" description="In Ref. 4; ABM92795." evidence="18" ref="4">
    <original>V</original>
    <variation>G</variation>
    <location>
        <position position="326"/>
    </location>
</feature>
<feature type="sequence conflict" description="In Ref. 1; AAB35476." evidence="18" ref="1">
    <original>R</original>
    <variation>G</variation>
    <location>
        <position position="401"/>
    </location>
</feature>
<feature type="sequence conflict" description="In Ref. 1; AAB35476." evidence="18" ref="1">
    <original>N</original>
    <variation>D</variation>
    <location>
        <position position="542"/>
    </location>
</feature>
<feature type="sequence conflict" description="In Ref. 1; AAB35476." evidence="18" ref="1">
    <original>S</original>
    <variation>SAIRWAK</variation>
    <location>
        <position position="668"/>
    </location>
</feature>
<feature type="sequence conflict" description="In Ref. 1; AAB35476." evidence="18" ref="1">
    <original>QR</original>
    <variation>HG</variation>
    <location>
        <begin position="1109"/>
        <end position="1110"/>
    </location>
</feature>
<feature type="sequence conflict" description="In Ref. 1; AAB35476." evidence="18" ref="1">
    <original>L</original>
    <variation>LQ</variation>
    <location>
        <position position="1415"/>
    </location>
</feature>
<organism evidence="20">
    <name type="scientific">Drosophila melanogaster</name>
    <name type="common">Fruit fly</name>
    <dbReference type="NCBI Taxonomy" id="7227"/>
    <lineage>
        <taxon>Eukaryota</taxon>
        <taxon>Metazoa</taxon>
        <taxon>Ecdysozoa</taxon>
        <taxon>Arthropoda</taxon>
        <taxon>Hexapoda</taxon>
        <taxon>Insecta</taxon>
        <taxon>Pterygota</taxon>
        <taxon>Neoptera</taxon>
        <taxon>Endopterygota</taxon>
        <taxon>Diptera</taxon>
        <taxon>Brachycera</taxon>
        <taxon>Muscomorpha</taxon>
        <taxon>Ephydroidea</taxon>
        <taxon>Drosophilidae</taxon>
        <taxon>Drosophila</taxon>
        <taxon>Sophophora</taxon>
    </lineage>
</organism>
<gene>
    <name evidence="19" type="primary">spn-E</name>
    <name evidence="19" type="synonym">hls</name>
    <name evidence="19" type="ORF">CG3158</name>
</gene>
<dbReference type="EC" id="3.6.4.13"/>
<dbReference type="EMBL" id="S79915">
    <property type="protein sequence ID" value="AAB35476.2"/>
    <property type="status" value="ALT_FRAME"/>
    <property type="molecule type" value="mRNA"/>
</dbReference>
<dbReference type="EMBL" id="AE014297">
    <property type="protein sequence ID" value="AAF55235.1"/>
    <property type="molecule type" value="Genomic_DNA"/>
</dbReference>
<dbReference type="EMBL" id="BT029921">
    <property type="protein sequence ID" value="ABM92795.1"/>
    <property type="molecule type" value="mRNA"/>
</dbReference>
<dbReference type="EMBL" id="BT100306">
    <property type="protein sequence ID" value="ACZ52618.1"/>
    <property type="molecule type" value="mRNA"/>
</dbReference>
<dbReference type="PIR" id="T13889">
    <property type="entry name" value="T13889"/>
</dbReference>
<dbReference type="RefSeq" id="NP_476741.1">
    <property type="nucleotide sequence ID" value="NM_057393.4"/>
</dbReference>
<dbReference type="SMR" id="Q9VF26"/>
<dbReference type="BioGRID" id="66977">
    <property type="interactions" value="8"/>
</dbReference>
<dbReference type="FunCoup" id="Q9VF26">
    <property type="interactions" value="176"/>
</dbReference>
<dbReference type="IntAct" id="Q9VF26">
    <property type="interactions" value="2"/>
</dbReference>
<dbReference type="STRING" id="7227.FBpp0082637"/>
<dbReference type="PaxDb" id="7227-FBpp0082637"/>
<dbReference type="DNASU" id="41919"/>
<dbReference type="EnsemblMetazoa" id="FBtr0083183">
    <property type="protein sequence ID" value="FBpp0082637"/>
    <property type="gene ID" value="FBgn0003483"/>
</dbReference>
<dbReference type="GeneID" id="41919"/>
<dbReference type="KEGG" id="dme:Dmel_CG3158"/>
<dbReference type="UCSC" id="CG3158-RA">
    <property type="organism name" value="d. melanogaster"/>
</dbReference>
<dbReference type="AGR" id="FB:FBgn0003483"/>
<dbReference type="CTD" id="41919"/>
<dbReference type="FlyBase" id="FBgn0003483">
    <property type="gene designation" value="spn-E"/>
</dbReference>
<dbReference type="VEuPathDB" id="VectorBase:FBgn0003483"/>
<dbReference type="eggNOG" id="KOG0920">
    <property type="taxonomic scope" value="Eukaryota"/>
</dbReference>
<dbReference type="GeneTree" id="ENSGT00940000157035"/>
<dbReference type="HOGENOM" id="CLU_002601_1_0_1"/>
<dbReference type="InParanoid" id="Q9VF26"/>
<dbReference type="OMA" id="QRSAYCS"/>
<dbReference type="OrthoDB" id="66977at2759"/>
<dbReference type="PhylomeDB" id="Q9VF26"/>
<dbReference type="BioGRID-ORCS" id="41919">
    <property type="hits" value="0 hits in 1 CRISPR screen"/>
</dbReference>
<dbReference type="GenomeRNAi" id="41919"/>
<dbReference type="PRO" id="PR:Q9VF26"/>
<dbReference type="Proteomes" id="UP000000803">
    <property type="component" value="Chromosome 3R"/>
</dbReference>
<dbReference type="Bgee" id="FBgn0003483">
    <property type="expression patterns" value="Expressed in egg cell and 23 other cell types or tissues"/>
</dbReference>
<dbReference type="ExpressionAtlas" id="Q9VF26">
    <property type="expression patterns" value="baseline and differential"/>
</dbReference>
<dbReference type="GO" id="GO:0005737">
    <property type="term" value="C:cytoplasm"/>
    <property type="evidence" value="ECO:0000314"/>
    <property type="project" value="FlyBase"/>
</dbReference>
<dbReference type="GO" id="GO:0005634">
    <property type="term" value="C:nucleus"/>
    <property type="evidence" value="ECO:0000314"/>
    <property type="project" value="FlyBase"/>
</dbReference>
<dbReference type="GO" id="GO:0043186">
    <property type="term" value="C:P granule"/>
    <property type="evidence" value="ECO:0000314"/>
    <property type="project" value="FlyBase"/>
</dbReference>
<dbReference type="GO" id="GO:0048471">
    <property type="term" value="C:perinuclear region of cytoplasm"/>
    <property type="evidence" value="ECO:0007669"/>
    <property type="project" value="UniProtKB-SubCell"/>
</dbReference>
<dbReference type="GO" id="GO:0005524">
    <property type="term" value="F:ATP binding"/>
    <property type="evidence" value="ECO:0007669"/>
    <property type="project" value="UniProtKB-KW"/>
</dbReference>
<dbReference type="GO" id="GO:0016887">
    <property type="term" value="F:ATP hydrolysis activity"/>
    <property type="evidence" value="ECO:0007669"/>
    <property type="project" value="RHEA"/>
</dbReference>
<dbReference type="GO" id="GO:0008186">
    <property type="term" value="F:ATP-dependent activity, acting on RNA"/>
    <property type="evidence" value="ECO:0000304"/>
    <property type="project" value="FlyBase"/>
</dbReference>
<dbReference type="GO" id="GO:0004386">
    <property type="term" value="F:helicase activity"/>
    <property type="evidence" value="ECO:0000250"/>
    <property type="project" value="FlyBase"/>
</dbReference>
<dbReference type="GO" id="GO:0003723">
    <property type="term" value="F:RNA binding"/>
    <property type="evidence" value="ECO:0000318"/>
    <property type="project" value="GO_Central"/>
</dbReference>
<dbReference type="GO" id="GO:0003724">
    <property type="term" value="F:RNA helicase activity"/>
    <property type="evidence" value="ECO:0000304"/>
    <property type="project" value="FlyBase"/>
</dbReference>
<dbReference type="GO" id="GO:0046843">
    <property type="term" value="P:dorsal appendage formation"/>
    <property type="evidence" value="ECO:0000315"/>
    <property type="project" value="FlyBase"/>
</dbReference>
<dbReference type="GO" id="GO:0007294">
    <property type="term" value="P:germarium-derived oocyte fate determination"/>
    <property type="evidence" value="ECO:0000316"/>
    <property type="project" value="FlyBase"/>
</dbReference>
<dbReference type="GO" id="GO:0098795">
    <property type="term" value="P:global gene silencing by mRNA cleavage"/>
    <property type="evidence" value="ECO:0000315"/>
    <property type="project" value="FlyBase"/>
</dbReference>
<dbReference type="GO" id="GO:0031507">
    <property type="term" value="P:heterochromatin formation"/>
    <property type="evidence" value="ECO:0000315"/>
    <property type="project" value="FlyBase"/>
</dbReference>
<dbReference type="GO" id="GO:0008298">
    <property type="term" value="P:intracellular mRNA localization"/>
    <property type="evidence" value="ECO:0000315"/>
    <property type="project" value="FlyBase"/>
</dbReference>
<dbReference type="GO" id="GO:0007076">
    <property type="term" value="P:mitotic chromosome condensation"/>
    <property type="evidence" value="ECO:0000315"/>
    <property type="project" value="FlyBase"/>
</dbReference>
<dbReference type="GO" id="GO:0030717">
    <property type="term" value="P:oocyte karyosome formation"/>
    <property type="evidence" value="ECO:0000315"/>
    <property type="project" value="FlyBase"/>
</dbReference>
<dbReference type="GO" id="GO:0030720">
    <property type="term" value="P:oocyte localization involved in germarium-derived egg chamber formation"/>
    <property type="evidence" value="ECO:0000315"/>
    <property type="project" value="FlyBase"/>
</dbReference>
<dbReference type="GO" id="GO:0001556">
    <property type="term" value="P:oocyte maturation"/>
    <property type="evidence" value="ECO:0000315"/>
    <property type="project" value="FlyBase"/>
</dbReference>
<dbReference type="GO" id="GO:0048477">
    <property type="term" value="P:oogenesis"/>
    <property type="evidence" value="ECO:0000315"/>
    <property type="project" value="FlyBase"/>
</dbReference>
<dbReference type="GO" id="GO:0140991">
    <property type="term" value="P:piRNA-mediated gene silencing by mRNA destabilization"/>
    <property type="evidence" value="ECO:0000315"/>
    <property type="project" value="FlyBase"/>
</dbReference>
<dbReference type="GO" id="GO:0009949">
    <property type="term" value="P:polarity specification of anterior/posterior axis"/>
    <property type="evidence" value="ECO:0000315"/>
    <property type="project" value="FlyBase"/>
</dbReference>
<dbReference type="GO" id="GO:0009951">
    <property type="term" value="P:polarity specification of dorsal/ventral axis"/>
    <property type="evidence" value="ECO:0000315"/>
    <property type="project" value="FlyBase"/>
</dbReference>
<dbReference type="GO" id="GO:0007315">
    <property type="term" value="P:pole plasm assembly"/>
    <property type="evidence" value="ECO:0000303"/>
    <property type="project" value="FlyBase"/>
</dbReference>
<dbReference type="GO" id="GO:0007317">
    <property type="term" value="P:regulation of pole plasm oskar mRNA localization"/>
    <property type="evidence" value="ECO:0000315"/>
    <property type="project" value="FlyBase"/>
</dbReference>
<dbReference type="GO" id="GO:0006403">
    <property type="term" value="P:RNA localization"/>
    <property type="evidence" value="ECO:0000304"/>
    <property type="project" value="FlyBase"/>
</dbReference>
<dbReference type="GO" id="GO:0140965">
    <property type="term" value="P:secondary piRNA processing"/>
    <property type="evidence" value="ECO:0000315"/>
    <property type="project" value="FlyBase"/>
</dbReference>
<dbReference type="GO" id="GO:0007283">
    <property type="term" value="P:spermatogenesis"/>
    <property type="evidence" value="ECO:0007669"/>
    <property type="project" value="UniProtKB-KW"/>
</dbReference>
<dbReference type="GO" id="GO:0010526">
    <property type="term" value="P:transposable element silencing"/>
    <property type="evidence" value="ECO:0000315"/>
    <property type="project" value="FlyBase"/>
</dbReference>
<dbReference type="GO" id="GO:0141009">
    <property type="term" value="P:transposable element silencing by piRNA-mediated mRNA destabilization"/>
    <property type="evidence" value="ECO:0000315"/>
    <property type="project" value="FlyBase"/>
</dbReference>
<dbReference type="CDD" id="cd17988">
    <property type="entry name" value="DEXHc_TDRD9"/>
    <property type="match status" value="1"/>
</dbReference>
<dbReference type="CDD" id="cd18791">
    <property type="entry name" value="SF2_C_RHA"/>
    <property type="match status" value="1"/>
</dbReference>
<dbReference type="FunFam" id="3.40.50.300:FF:001676">
    <property type="entry name" value="DExH-box ATP-dependent RNA helicase DExH7 chloroplastic"/>
    <property type="match status" value="1"/>
</dbReference>
<dbReference type="FunFam" id="1.20.120.1080:FF:000052">
    <property type="entry name" value="Probable ATP-dependent RNA helicase spindle-E"/>
    <property type="match status" value="1"/>
</dbReference>
<dbReference type="FunFam" id="3.40.50.300:FF:004061">
    <property type="entry name" value="Probable ATP-dependent RNA helicase spindle-E"/>
    <property type="match status" value="1"/>
</dbReference>
<dbReference type="Gene3D" id="1.20.120.1080">
    <property type="match status" value="1"/>
</dbReference>
<dbReference type="Gene3D" id="2.30.30.140">
    <property type="match status" value="1"/>
</dbReference>
<dbReference type="Gene3D" id="2.40.50.90">
    <property type="match status" value="1"/>
</dbReference>
<dbReference type="Gene3D" id="3.40.50.300">
    <property type="entry name" value="P-loop containing nucleotide triphosphate hydrolases"/>
    <property type="match status" value="2"/>
</dbReference>
<dbReference type="InterPro" id="IPR011545">
    <property type="entry name" value="DEAD/DEAH_box_helicase_dom"/>
</dbReference>
<dbReference type="InterPro" id="IPR007502">
    <property type="entry name" value="Helicase-assoc_dom"/>
</dbReference>
<dbReference type="InterPro" id="IPR014001">
    <property type="entry name" value="Helicase_ATP-bd"/>
</dbReference>
<dbReference type="InterPro" id="IPR001650">
    <property type="entry name" value="Helicase_C-like"/>
</dbReference>
<dbReference type="InterPro" id="IPR027417">
    <property type="entry name" value="P-loop_NTPase"/>
</dbReference>
<dbReference type="InterPro" id="IPR035437">
    <property type="entry name" value="SNase_OB-fold_sf"/>
</dbReference>
<dbReference type="InterPro" id="IPR002999">
    <property type="entry name" value="Tudor"/>
</dbReference>
<dbReference type="InterPro" id="IPR013087">
    <property type="entry name" value="Znf_C2H2_type"/>
</dbReference>
<dbReference type="PANTHER" id="PTHR18934">
    <property type="entry name" value="ATP-DEPENDENT RNA HELICASE"/>
    <property type="match status" value="1"/>
</dbReference>
<dbReference type="PANTHER" id="PTHR18934:SF113">
    <property type="entry name" value="ATP-DEPENDENT RNA HELICASE TDRD9"/>
    <property type="match status" value="1"/>
</dbReference>
<dbReference type="Pfam" id="PF00270">
    <property type="entry name" value="DEAD"/>
    <property type="match status" value="1"/>
</dbReference>
<dbReference type="Pfam" id="PF00271">
    <property type="entry name" value="Helicase_C"/>
    <property type="match status" value="1"/>
</dbReference>
<dbReference type="Pfam" id="PF00567">
    <property type="entry name" value="TUDOR"/>
    <property type="match status" value="1"/>
</dbReference>
<dbReference type="SMART" id="SM00487">
    <property type="entry name" value="DEXDc"/>
    <property type="match status" value="1"/>
</dbReference>
<dbReference type="SMART" id="SM00847">
    <property type="entry name" value="HA2"/>
    <property type="match status" value="1"/>
</dbReference>
<dbReference type="SMART" id="SM00490">
    <property type="entry name" value="HELICc"/>
    <property type="match status" value="1"/>
</dbReference>
<dbReference type="SMART" id="SM00333">
    <property type="entry name" value="TUDOR"/>
    <property type="match status" value="1"/>
</dbReference>
<dbReference type="SUPFAM" id="SSF52540">
    <property type="entry name" value="P-loop containing nucleoside triphosphate hydrolases"/>
    <property type="match status" value="1"/>
</dbReference>
<dbReference type="SUPFAM" id="SSF63748">
    <property type="entry name" value="Tudor/PWWP/MBT"/>
    <property type="match status" value="1"/>
</dbReference>
<dbReference type="PROSITE" id="PS51192">
    <property type="entry name" value="HELICASE_ATP_BIND_1"/>
    <property type="match status" value="1"/>
</dbReference>
<dbReference type="PROSITE" id="PS51194">
    <property type="entry name" value="HELICASE_CTER"/>
    <property type="match status" value="1"/>
</dbReference>
<dbReference type="PROSITE" id="PS50304">
    <property type="entry name" value="TUDOR"/>
    <property type="match status" value="1"/>
</dbReference>
<evidence type="ECO:0000255" key="1">
    <source>
        <dbReference type="PROSITE-ProRule" id="PRU00211"/>
    </source>
</evidence>
<evidence type="ECO:0000255" key="2">
    <source>
        <dbReference type="PROSITE-ProRule" id="PRU00541"/>
    </source>
</evidence>
<evidence type="ECO:0000255" key="3">
    <source>
        <dbReference type="PROSITE-ProRule" id="PRU00542"/>
    </source>
</evidence>
<evidence type="ECO:0000269" key="4">
    <source>
    </source>
</evidence>
<evidence type="ECO:0000269" key="5">
    <source>
    </source>
</evidence>
<evidence type="ECO:0000269" key="6">
    <source>
    </source>
</evidence>
<evidence type="ECO:0000269" key="7">
    <source>
    </source>
</evidence>
<evidence type="ECO:0000269" key="8">
    <source>
    </source>
</evidence>
<evidence type="ECO:0000269" key="9">
    <source>
    </source>
</evidence>
<evidence type="ECO:0000269" key="10">
    <source>
    </source>
</evidence>
<evidence type="ECO:0000269" key="11">
    <source>
    </source>
</evidence>
<evidence type="ECO:0000269" key="12">
    <source>
    </source>
</evidence>
<evidence type="ECO:0000269" key="13">
    <source>
    </source>
</evidence>
<evidence type="ECO:0000269" key="14">
    <source>
    </source>
</evidence>
<evidence type="ECO:0000269" key="15">
    <source>
    </source>
</evidence>
<evidence type="ECO:0000269" key="16">
    <source>
    </source>
</evidence>
<evidence type="ECO:0000269" key="17">
    <source>
    </source>
</evidence>
<evidence type="ECO:0000305" key="18"/>
<evidence type="ECO:0000312" key="19">
    <source>
        <dbReference type="FlyBase" id="FBgn0003483"/>
    </source>
</evidence>
<evidence type="ECO:0000312" key="20">
    <source>
        <dbReference type="Proteomes" id="UP000000803"/>
    </source>
</evidence>
<accession>Q9VF26</accession>
<accession>A2RVD0</accession>
<accession>Q26453</accession>
<name>SPNE_DROME</name>
<keyword id="KW-0067">ATP-binding</keyword>
<keyword id="KW-0963">Cytoplasm</keyword>
<keyword id="KW-0217">Developmental protein</keyword>
<keyword id="KW-0221">Differentiation</keyword>
<keyword id="KW-0347">Helicase</keyword>
<keyword id="KW-0378">Hydrolase</keyword>
<keyword id="KW-0469">Meiosis</keyword>
<keyword id="KW-0547">Nucleotide-binding</keyword>
<keyword id="KW-0896">Oogenesis</keyword>
<keyword id="KW-1185">Reference proteome</keyword>
<keyword id="KW-0943">RNA-mediated gene silencing</keyword>
<keyword id="KW-0744">Spermatogenesis</keyword>
<proteinExistence type="evidence at transcript level"/>
<reference key="1">
    <citation type="journal article" date="1995" name="Genes Dev.">
        <title>Homeless is required for RNA localization in Drosophila oogenesis and encodes a new member of the DE-H family of RNA-dependent ATPases.</title>
        <authorList>
            <person name="Gillespie D.E."/>
            <person name="Berg C.A."/>
        </authorList>
    </citation>
    <scope>NUCLEOTIDE SEQUENCE [MRNA]</scope>
    <scope>FUNCTION</scope>
    <scope>DISRUPTION PHENOTYPE</scope>
    <source>
        <strain>Canton-S</strain>
        <tissue>Ovary</tissue>
    </source>
</reference>
<reference key="2">
    <citation type="journal article" date="2000" name="Science">
        <title>The genome sequence of Drosophila melanogaster.</title>
        <authorList>
            <person name="Adams M.D."/>
            <person name="Celniker S.E."/>
            <person name="Holt R.A."/>
            <person name="Evans C.A."/>
            <person name="Gocayne J.D."/>
            <person name="Amanatides P.G."/>
            <person name="Scherer S.E."/>
            <person name="Li P.W."/>
            <person name="Hoskins R.A."/>
            <person name="Galle R.F."/>
            <person name="George R.A."/>
            <person name="Lewis S.E."/>
            <person name="Richards S."/>
            <person name="Ashburner M."/>
            <person name="Henderson S.N."/>
            <person name="Sutton G.G."/>
            <person name="Wortman J.R."/>
            <person name="Yandell M.D."/>
            <person name="Zhang Q."/>
            <person name="Chen L.X."/>
            <person name="Brandon R.C."/>
            <person name="Rogers Y.-H.C."/>
            <person name="Blazej R.G."/>
            <person name="Champe M."/>
            <person name="Pfeiffer B.D."/>
            <person name="Wan K.H."/>
            <person name="Doyle C."/>
            <person name="Baxter E.G."/>
            <person name="Helt G."/>
            <person name="Nelson C.R."/>
            <person name="Miklos G.L.G."/>
            <person name="Abril J.F."/>
            <person name="Agbayani A."/>
            <person name="An H.-J."/>
            <person name="Andrews-Pfannkoch C."/>
            <person name="Baldwin D."/>
            <person name="Ballew R.M."/>
            <person name="Basu A."/>
            <person name="Baxendale J."/>
            <person name="Bayraktaroglu L."/>
            <person name="Beasley E.M."/>
            <person name="Beeson K.Y."/>
            <person name="Benos P.V."/>
            <person name="Berman B.P."/>
            <person name="Bhandari D."/>
            <person name="Bolshakov S."/>
            <person name="Borkova D."/>
            <person name="Botchan M.R."/>
            <person name="Bouck J."/>
            <person name="Brokstein P."/>
            <person name="Brottier P."/>
            <person name="Burtis K.C."/>
            <person name="Busam D.A."/>
            <person name="Butler H."/>
            <person name="Cadieu E."/>
            <person name="Center A."/>
            <person name="Chandra I."/>
            <person name="Cherry J.M."/>
            <person name="Cawley S."/>
            <person name="Dahlke C."/>
            <person name="Davenport L.B."/>
            <person name="Davies P."/>
            <person name="de Pablos B."/>
            <person name="Delcher A."/>
            <person name="Deng Z."/>
            <person name="Mays A.D."/>
            <person name="Dew I."/>
            <person name="Dietz S.M."/>
            <person name="Dodson K."/>
            <person name="Doup L.E."/>
            <person name="Downes M."/>
            <person name="Dugan-Rocha S."/>
            <person name="Dunkov B.C."/>
            <person name="Dunn P."/>
            <person name="Durbin K.J."/>
            <person name="Evangelista C.C."/>
            <person name="Ferraz C."/>
            <person name="Ferriera S."/>
            <person name="Fleischmann W."/>
            <person name="Fosler C."/>
            <person name="Gabrielian A.E."/>
            <person name="Garg N.S."/>
            <person name="Gelbart W.M."/>
            <person name="Glasser K."/>
            <person name="Glodek A."/>
            <person name="Gong F."/>
            <person name="Gorrell J.H."/>
            <person name="Gu Z."/>
            <person name="Guan P."/>
            <person name="Harris M."/>
            <person name="Harris N.L."/>
            <person name="Harvey D.A."/>
            <person name="Heiman T.J."/>
            <person name="Hernandez J.R."/>
            <person name="Houck J."/>
            <person name="Hostin D."/>
            <person name="Houston K.A."/>
            <person name="Howland T.J."/>
            <person name="Wei M.-H."/>
            <person name="Ibegwam C."/>
            <person name="Jalali M."/>
            <person name="Kalush F."/>
            <person name="Karpen G.H."/>
            <person name="Ke Z."/>
            <person name="Kennison J.A."/>
            <person name="Ketchum K.A."/>
            <person name="Kimmel B.E."/>
            <person name="Kodira C.D."/>
            <person name="Kraft C.L."/>
            <person name="Kravitz S."/>
            <person name="Kulp D."/>
            <person name="Lai Z."/>
            <person name="Lasko P."/>
            <person name="Lei Y."/>
            <person name="Levitsky A.A."/>
            <person name="Li J.H."/>
            <person name="Li Z."/>
            <person name="Liang Y."/>
            <person name="Lin X."/>
            <person name="Liu X."/>
            <person name="Mattei B."/>
            <person name="McIntosh T.C."/>
            <person name="McLeod M.P."/>
            <person name="McPherson D."/>
            <person name="Merkulov G."/>
            <person name="Milshina N.V."/>
            <person name="Mobarry C."/>
            <person name="Morris J."/>
            <person name="Moshrefi A."/>
            <person name="Mount S.M."/>
            <person name="Moy M."/>
            <person name="Murphy B."/>
            <person name="Murphy L."/>
            <person name="Muzny D.M."/>
            <person name="Nelson D.L."/>
            <person name="Nelson D.R."/>
            <person name="Nelson K.A."/>
            <person name="Nixon K."/>
            <person name="Nusskern D.R."/>
            <person name="Pacleb J.M."/>
            <person name="Palazzolo M."/>
            <person name="Pittman G.S."/>
            <person name="Pan S."/>
            <person name="Pollard J."/>
            <person name="Puri V."/>
            <person name="Reese M.G."/>
            <person name="Reinert K."/>
            <person name="Remington K."/>
            <person name="Saunders R.D.C."/>
            <person name="Scheeler F."/>
            <person name="Shen H."/>
            <person name="Shue B.C."/>
            <person name="Siden-Kiamos I."/>
            <person name="Simpson M."/>
            <person name="Skupski M.P."/>
            <person name="Smith T.J."/>
            <person name="Spier E."/>
            <person name="Spradling A.C."/>
            <person name="Stapleton M."/>
            <person name="Strong R."/>
            <person name="Sun E."/>
            <person name="Svirskas R."/>
            <person name="Tector C."/>
            <person name="Turner R."/>
            <person name="Venter E."/>
            <person name="Wang A.H."/>
            <person name="Wang X."/>
            <person name="Wang Z.-Y."/>
            <person name="Wassarman D.A."/>
            <person name="Weinstock G.M."/>
            <person name="Weissenbach J."/>
            <person name="Williams S.M."/>
            <person name="Woodage T."/>
            <person name="Worley K.C."/>
            <person name="Wu D."/>
            <person name="Yang S."/>
            <person name="Yao Q.A."/>
            <person name="Ye J."/>
            <person name="Yeh R.-F."/>
            <person name="Zaveri J.S."/>
            <person name="Zhan M."/>
            <person name="Zhang G."/>
            <person name="Zhao Q."/>
            <person name="Zheng L."/>
            <person name="Zheng X.H."/>
            <person name="Zhong F.N."/>
            <person name="Zhong W."/>
            <person name="Zhou X."/>
            <person name="Zhu S.C."/>
            <person name="Zhu X."/>
            <person name="Smith H.O."/>
            <person name="Gibbs R.A."/>
            <person name="Myers E.W."/>
            <person name="Rubin G.M."/>
            <person name="Venter J.C."/>
        </authorList>
    </citation>
    <scope>NUCLEOTIDE SEQUENCE [LARGE SCALE GENOMIC DNA]</scope>
    <source>
        <strain>Berkeley</strain>
    </source>
</reference>
<reference key="3">
    <citation type="journal article" date="2002" name="Genome Biol.">
        <title>Annotation of the Drosophila melanogaster euchromatic genome: a systematic review.</title>
        <authorList>
            <person name="Misra S."/>
            <person name="Crosby M.A."/>
            <person name="Mungall C.J."/>
            <person name="Matthews B.B."/>
            <person name="Campbell K.S."/>
            <person name="Hradecky P."/>
            <person name="Huang Y."/>
            <person name="Kaminker J.S."/>
            <person name="Millburn G.H."/>
            <person name="Prochnik S.E."/>
            <person name="Smith C.D."/>
            <person name="Tupy J.L."/>
            <person name="Whitfield E.J."/>
            <person name="Bayraktaroglu L."/>
            <person name="Berman B.P."/>
            <person name="Bettencourt B.R."/>
            <person name="Celniker S.E."/>
            <person name="de Grey A.D.N.J."/>
            <person name="Drysdale R.A."/>
            <person name="Harris N.L."/>
            <person name="Richter J."/>
            <person name="Russo S."/>
            <person name="Schroeder A.J."/>
            <person name="Shu S.Q."/>
            <person name="Stapleton M."/>
            <person name="Yamada C."/>
            <person name="Ashburner M."/>
            <person name="Gelbart W.M."/>
            <person name="Rubin G.M."/>
            <person name="Lewis S.E."/>
        </authorList>
    </citation>
    <scope>GENOME REANNOTATION</scope>
    <source>
        <strain>Berkeley</strain>
    </source>
</reference>
<reference key="4">
    <citation type="submission" date="2009-11" db="EMBL/GenBank/DDBJ databases">
        <authorList>
            <person name="Carlson J."/>
            <person name="Booth B."/>
            <person name="Frise E."/>
            <person name="Park S."/>
            <person name="Wan K."/>
            <person name="Yu C."/>
            <person name="Celniker S."/>
        </authorList>
    </citation>
    <scope>NUCLEOTIDE SEQUENCE [LARGE SCALE MRNA]</scope>
    <source>
        <strain>Berkeley</strain>
    </source>
</reference>
<reference key="5">
    <citation type="journal article" date="2001" name="Chromosoma">
        <title>A role of the Drosophila homeless gene in repression of Stellate in male meiosis.</title>
        <authorList>
            <person name="Stapleton W."/>
            <person name="Das S."/>
            <person name="McKee B.D."/>
        </authorList>
    </citation>
    <scope>FUNCTION</scope>
</reference>
<reference key="6">
    <citation type="journal article" date="2001" name="Curr. Biol.">
        <title>Double-stranded RNA-mediated silencing of genomic tandem repeats and transposable elements in the D. melanogaster germline.</title>
        <authorList>
            <person name="Aravin A.A."/>
            <person name="Naumova N.M."/>
            <person name="Tulin A.V."/>
            <person name="Vagin V.V."/>
            <person name="Rozovsky Y.M."/>
            <person name="Gvozdev V.A."/>
        </authorList>
    </citation>
    <scope>FUNCTION</scope>
</reference>
<reference key="7">
    <citation type="journal article" date="2002" name="Genes Dev.">
        <title>RNAi is activated during Drosophila oocyte maturation in a manner dependent on aubergine and spindle-E.</title>
        <authorList>
            <person name="Kennerdell J.R."/>
            <person name="Yamaguchi S."/>
            <person name="Carthew R.W."/>
        </authorList>
    </citation>
    <scope>FUNCTION</scope>
</reference>
<reference key="8">
    <citation type="journal article" date="2004" name="Mol. Cell. Biol.">
        <title>Dissection of a natural RNA silencing process in the Drosophila melanogaster germ line.</title>
        <authorList>
            <person name="Aravin A.A."/>
            <person name="Klenov M.S."/>
            <person name="Vagin V.V."/>
            <person name="Bantignies F."/>
            <person name="Cavalli G."/>
            <person name="Gvozdev V.A."/>
        </authorList>
    </citation>
    <scope>FUNCTION</scope>
</reference>
<reference key="9">
    <citation type="journal article" date="2004" name="RNA Biol.">
        <title>The RNA interference proteins and vasa locus are involved in the silencing of retrotransposons in the female germline of Drosophila melanogaster.</title>
        <authorList>
            <person name="Vagin V.V."/>
            <person name="Klenov M.S."/>
            <person name="Kalmykova A.I."/>
            <person name="Stolyarenko A.D."/>
            <person name="Kotelnikov R.N."/>
            <person name="Gvozdev V.A."/>
        </authorList>
    </citation>
    <scope>FUNCTION</scope>
</reference>
<reference key="10">
    <citation type="journal article" date="2004" name="Science">
        <title>Heterochromatic silencing and HP1 localization in Drosophila are dependent on the RNAi machinery.</title>
        <authorList>
            <person name="Pal-Bhadra M."/>
            <person name="Leibovitch B.A."/>
            <person name="Gandhi S.G."/>
            <person name="Rao M."/>
            <person name="Bhadra U."/>
            <person name="Birchler J.A."/>
            <person name="Elgin S.C.R."/>
        </authorList>
    </citation>
    <scope>FUNCTION</scope>
</reference>
<reference key="11">
    <citation type="journal article" date="2006" name="Genes Dev.">
        <title>Telomere elongation is under the control of the RNAi-based mechanism in the Drosophila germline.</title>
        <authorList>
            <person name="Savitsky M."/>
            <person name="Kwon D."/>
            <person name="Georgiev P."/>
            <person name="Kalmykova A."/>
            <person name="Gvozdev V."/>
        </authorList>
    </citation>
    <scope>FUNCTION</scope>
</reference>
<reference key="12">
    <citation type="journal article" date="2006" name="Science">
        <title>A distinct small RNA pathway silences selfish genetic elements in the germline.</title>
        <authorList>
            <person name="Vagin V.V."/>
            <person name="Sigova A."/>
            <person name="Li C."/>
            <person name="Seitz H."/>
            <person name="Gvozdev V."/>
            <person name="Zamore P.D."/>
        </authorList>
    </citation>
    <scope>FUNCTION</scope>
    <scope>DISRUPTION PHENOTYPE</scope>
</reference>
<reference key="13">
    <citation type="journal article" date="2007" name="Genetics">
        <title>Cytotype regulation by telomeric P elements in Drosophila melanogaster: evidence for involvement of an RNA interference gene.</title>
        <authorList>
            <person name="Simmons M.J."/>
            <person name="Ryzek D.F."/>
            <person name="Lamour C."/>
            <person name="Goodman J.W."/>
            <person name="Kummer N.E."/>
            <person name="Merriman P.J."/>
        </authorList>
    </citation>
    <scope>FUNCTION</scope>
</reference>
<reference key="14">
    <citation type="journal article" date="2007" name="PLoS Genet.">
        <title>Telomeric trans-silencing: an epigenetic repression combining RNA silencing and heterochromatin formation.</title>
        <authorList>
            <person name="Josse T."/>
            <person name="Teysset L."/>
            <person name="Todeschini A.L."/>
            <person name="Sidor C.M."/>
            <person name="Anxolabehere D."/>
            <person name="Ronsseray S."/>
        </authorList>
    </citation>
    <scope>FUNCTION</scope>
</reference>
<reference key="15">
    <citation type="journal article" date="2007" name="Proc. Natl. Acad. Sci. U.S.A.">
        <title>Unique germ-line organelle, nuage, functions to repress selfish genetic elements in Drosophila melanogaster.</title>
        <authorList>
            <person name="Lim A.K."/>
            <person name="Kai T."/>
        </authorList>
    </citation>
    <scope>FUNCTION</scope>
</reference>
<reference key="16">
    <citation type="journal article" date="2007" name="Proc. Natl. Acad. Sci. U.S.A.">
        <authorList>
            <person name="Lim A.K."/>
            <person name="Kai T."/>
        </authorList>
    </citation>
    <scope>ERRATUM OF PUBMED:17428915</scope>
</reference>
<reference key="17">
    <citation type="journal article" date="2009" name="J. Cell Biol.">
        <title>piRNAs mediate posttranscriptional retroelement silencing and localization to pi-bodies in the Drosophila germline.</title>
        <authorList>
            <person name="Lim A.K."/>
            <person name="Tao L."/>
            <person name="Kai T."/>
        </authorList>
    </citation>
    <scope>FUNCTION</scope>
    <scope>DISRUPTION PHENOTYPE</scope>
</reference>
<reference key="18">
    <citation type="journal article" date="2015" name="Mol. Cell">
        <title>Aub and Ago3 Are Recruited to Nuage through Two Mechanisms to Form a Ping-Pong Complex Assembled by Krimper.</title>
        <authorList>
            <person name="Webster A."/>
            <person name="Li S."/>
            <person name="Hur J.K."/>
            <person name="Wachsmuth M."/>
            <person name="Bois J.S."/>
            <person name="Perkins E.M."/>
            <person name="Patel D.J."/>
            <person name="Aravin A.A."/>
        </authorList>
    </citation>
    <scope>SUBCELLULAR LOCATION</scope>
</reference>